<dbReference type="EC" id="1.-.-.-" evidence="3"/>
<dbReference type="EMBL" id="AL591688">
    <property type="protein sequence ID" value="CAC45653.1"/>
    <property type="molecule type" value="Genomic_DNA"/>
</dbReference>
<dbReference type="RefSeq" id="NP_385180.1">
    <property type="nucleotide sequence ID" value="NC_003047.1"/>
</dbReference>
<dbReference type="RefSeq" id="WP_010969023.1">
    <property type="nucleotide sequence ID" value="NC_003047.1"/>
</dbReference>
<dbReference type="PDB" id="2Q62">
    <property type="method" value="X-ray"/>
    <property type="resolution" value="1.80 A"/>
    <property type="chains" value="A/B/C/D/E/F/G/H=1-241"/>
</dbReference>
<dbReference type="PDBsum" id="2Q62"/>
<dbReference type="SMR" id="Q92R45"/>
<dbReference type="EnsemblBacteria" id="CAC45653">
    <property type="protein sequence ID" value="CAC45653"/>
    <property type="gene ID" value="SMc02650"/>
</dbReference>
<dbReference type="KEGG" id="sme:SMc02650"/>
<dbReference type="PATRIC" id="fig|266834.11.peg.2480"/>
<dbReference type="eggNOG" id="COG0431">
    <property type="taxonomic scope" value="Bacteria"/>
</dbReference>
<dbReference type="HOGENOM" id="CLU_055322_0_1_5"/>
<dbReference type="OrthoDB" id="571777at2"/>
<dbReference type="EvolutionaryTrace" id="Q92R45"/>
<dbReference type="Proteomes" id="UP000001976">
    <property type="component" value="Chromosome"/>
</dbReference>
<dbReference type="GO" id="GO:0010181">
    <property type="term" value="F:FMN binding"/>
    <property type="evidence" value="ECO:0000250"/>
    <property type="project" value="UniProtKB"/>
</dbReference>
<dbReference type="GO" id="GO:0052873">
    <property type="term" value="F:FMN reductase (NADPH) activity"/>
    <property type="evidence" value="ECO:0000314"/>
    <property type="project" value="UniProtKB"/>
</dbReference>
<dbReference type="GO" id="GO:0016655">
    <property type="term" value="F:oxidoreductase activity, acting on NAD(P)H, quinone or similar compound as acceptor"/>
    <property type="evidence" value="ECO:0007669"/>
    <property type="project" value="TreeGrafter"/>
</dbReference>
<dbReference type="GO" id="GO:0051289">
    <property type="term" value="P:protein homotetramerization"/>
    <property type="evidence" value="ECO:0000314"/>
    <property type="project" value="UniProtKB"/>
</dbReference>
<dbReference type="GO" id="GO:0010038">
    <property type="term" value="P:response to metal ion"/>
    <property type="evidence" value="ECO:0000315"/>
    <property type="project" value="UniProtKB"/>
</dbReference>
<dbReference type="FunFam" id="3.40.50.360:FF:000027">
    <property type="entry name" value="Arsenical resistance protein ArsH"/>
    <property type="match status" value="1"/>
</dbReference>
<dbReference type="Gene3D" id="3.40.50.360">
    <property type="match status" value="1"/>
</dbReference>
<dbReference type="InterPro" id="IPR014063">
    <property type="entry name" value="Arsenate-R_ArsH"/>
</dbReference>
<dbReference type="InterPro" id="IPR029039">
    <property type="entry name" value="Flavoprotein-like_sf"/>
</dbReference>
<dbReference type="InterPro" id="IPR005025">
    <property type="entry name" value="FMN_Rdtase-like_dom"/>
</dbReference>
<dbReference type="NCBIfam" id="TIGR02690">
    <property type="entry name" value="resist_ArsH"/>
    <property type="match status" value="1"/>
</dbReference>
<dbReference type="PANTHER" id="PTHR43590">
    <property type="entry name" value="ARSENIC RESISTANCE PROTEIN ARSH (AFU_ORTHOLOGUE AFUA_5G15030)"/>
    <property type="match status" value="1"/>
</dbReference>
<dbReference type="PANTHER" id="PTHR43590:SF1">
    <property type="entry name" value="ARSENIC RESISTANCE PROTEIN ARSH (AFU_ORTHOLOGUE AFUA_5G15030)"/>
    <property type="match status" value="1"/>
</dbReference>
<dbReference type="Pfam" id="PF03358">
    <property type="entry name" value="FMN_red"/>
    <property type="match status" value="1"/>
</dbReference>
<dbReference type="SUPFAM" id="SSF52218">
    <property type="entry name" value="Flavoproteins"/>
    <property type="match status" value="1"/>
</dbReference>
<keyword id="KW-0002">3D-structure</keyword>
<keyword id="KW-0285">Flavoprotein</keyword>
<keyword id="KW-0288">FMN</keyword>
<keyword id="KW-0521">NADP</keyword>
<keyword id="KW-0547">Nucleotide-binding</keyword>
<keyword id="KW-0560">Oxidoreductase</keyword>
<keyword id="KW-1185">Reference proteome</keyword>
<comment type="function">
    <text evidence="3">Has NADPH-dependent FMN reductase activity. No activity with NADH. May play a role in resistance to heavy metal toxicity.</text>
</comment>
<comment type="cofactor">
    <cofactor evidence="3">
        <name>FMN</name>
        <dbReference type="ChEBI" id="CHEBI:58210"/>
    </cofactor>
</comment>
<comment type="biophysicochemical properties">
    <kinetics>
        <KM evidence="3">0.1 mM for NADPH</KM>
        <Vmax evidence="3">70.0 umol/min/mg enzyme</Vmax>
        <text evidence="3">Concentration of FMN required for half-maximal activation is 7.5 uM.</text>
    </kinetics>
    <phDependence>
        <text evidence="3">Optimum pH is between 6.5-7.5.</text>
    </phDependence>
</comment>
<comment type="subunit">
    <text evidence="3">Homotetramer.</text>
</comment>
<comment type="disruption phenotype">
    <text evidence="2">Sensitive to low levels of AsO4(3-) and to a lesser degree to As(5+).</text>
</comment>
<comment type="similarity">
    <text evidence="6">Belongs to the ArsH family.</text>
</comment>
<name>ARREH_RHIME</name>
<protein>
    <recommendedName>
        <fullName evidence="6">NADPH-dependent FMN reductase ArsH</fullName>
        <ecNumber evidence="3">1.-.-.-</ecNumber>
    </recommendedName>
    <alternativeName>
        <fullName evidence="6">Arsenical resistance operon protein ArsH</fullName>
    </alternativeName>
</protein>
<feature type="chain" id="PRO_0000432220" description="NADPH-dependent FMN reductase ArsH">
    <location>
        <begin position="1"/>
        <end position="241"/>
    </location>
</feature>
<feature type="binding site" evidence="1">
    <location>
        <begin position="43"/>
        <end position="50"/>
    </location>
    <ligand>
        <name>FMN</name>
        <dbReference type="ChEBI" id="CHEBI:58210"/>
    </ligand>
</feature>
<feature type="turn" evidence="10">
    <location>
        <begin position="15"/>
        <end position="17"/>
    </location>
</feature>
<feature type="helix" evidence="10">
    <location>
        <begin position="23"/>
        <end position="26"/>
    </location>
</feature>
<feature type="strand" evidence="10">
    <location>
        <begin position="36"/>
        <end position="41"/>
    </location>
</feature>
<feature type="helix" evidence="10">
    <location>
        <begin position="49"/>
        <end position="63"/>
    </location>
</feature>
<feature type="strand" evidence="10">
    <location>
        <begin position="67"/>
        <end position="70"/>
    </location>
</feature>
<feature type="helix" evidence="10">
    <location>
        <begin position="87"/>
        <end position="98"/>
    </location>
</feature>
<feature type="strand" evidence="10">
    <location>
        <begin position="100"/>
        <end position="107"/>
    </location>
</feature>
<feature type="strand" evidence="10">
    <location>
        <begin position="109"/>
        <end position="112"/>
    </location>
</feature>
<feature type="helix" evidence="10">
    <location>
        <begin position="115"/>
        <end position="122"/>
    </location>
</feature>
<feature type="strand" evidence="10">
    <location>
        <begin position="138"/>
        <end position="144"/>
    </location>
</feature>
<feature type="strand" evidence="10">
    <location>
        <begin position="146"/>
        <end position="148"/>
    </location>
</feature>
<feature type="helix" evidence="10">
    <location>
        <begin position="152"/>
        <end position="163"/>
    </location>
</feature>
<feature type="strand" evidence="10">
    <location>
        <begin position="173"/>
        <end position="177"/>
    </location>
</feature>
<feature type="helix" evidence="10">
    <location>
        <begin position="178"/>
        <end position="181"/>
    </location>
</feature>
<feature type="helix" evidence="10">
    <location>
        <begin position="192"/>
        <end position="211"/>
    </location>
</feature>
<feature type="turn" evidence="10">
    <location>
        <begin position="212"/>
        <end position="214"/>
    </location>
</feature>
<feature type="helix" evidence="10">
    <location>
        <begin position="215"/>
        <end position="218"/>
    </location>
</feature>
<feature type="helix" evidence="10">
    <location>
        <begin position="222"/>
        <end position="226"/>
    </location>
</feature>
<feature type="helix" evidence="10">
    <location>
        <begin position="230"/>
        <end position="238"/>
    </location>
</feature>
<organism>
    <name type="scientific">Rhizobium meliloti (strain 1021)</name>
    <name type="common">Ensifer meliloti</name>
    <name type="synonym">Sinorhizobium meliloti</name>
    <dbReference type="NCBI Taxonomy" id="266834"/>
    <lineage>
        <taxon>Bacteria</taxon>
        <taxon>Pseudomonadati</taxon>
        <taxon>Pseudomonadota</taxon>
        <taxon>Alphaproteobacteria</taxon>
        <taxon>Hyphomicrobiales</taxon>
        <taxon>Rhizobiaceae</taxon>
        <taxon>Sinorhizobium/Ensifer group</taxon>
        <taxon>Sinorhizobium</taxon>
    </lineage>
</organism>
<reference key="1">
    <citation type="journal article" date="2001" name="Proc. Natl. Acad. Sci. U.S.A.">
        <title>Analysis of the chromosome sequence of the legume symbiont Sinorhizobium meliloti strain 1021.</title>
        <authorList>
            <person name="Capela D."/>
            <person name="Barloy-Hubler F."/>
            <person name="Gouzy J."/>
            <person name="Bothe G."/>
            <person name="Ampe F."/>
            <person name="Batut J."/>
            <person name="Boistard P."/>
            <person name="Becker A."/>
            <person name="Boutry M."/>
            <person name="Cadieu E."/>
            <person name="Dreano S."/>
            <person name="Gloux S."/>
            <person name="Godrie T."/>
            <person name="Goffeau A."/>
            <person name="Kahn D."/>
            <person name="Kiss E."/>
            <person name="Lelaure V."/>
            <person name="Masuy D."/>
            <person name="Pohl T."/>
            <person name="Portetelle D."/>
            <person name="Puehler A."/>
            <person name="Purnelle B."/>
            <person name="Ramsperger U."/>
            <person name="Renard C."/>
            <person name="Thebault P."/>
            <person name="Vandenbol M."/>
            <person name="Weidner S."/>
            <person name="Galibert F."/>
        </authorList>
    </citation>
    <scope>NUCLEOTIDE SEQUENCE [LARGE SCALE GENOMIC DNA]</scope>
    <source>
        <strain evidence="8">1021</strain>
    </source>
</reference>
<reference key="2">
    <citation type="journal article" date="2001" name="Science">
        <title>The composite genome of the legume symbiont Sinorhizobium meliloti.</title>
        <authorList>
            <person name="Galibert F."/>
            <person name="Finan T.M."/>
            <person name="Long S.R."/>
            <person name="Puehler A."/>
            <person name="Abola P."/>
            <person name="Ampe F."/>
            <person name="Barloy-Hubler F."/>
            <person name="Barnett M.J."/>
            <person name="Becker A."/>
            <person name="Boistard P."/>
            <person name="Bothe G."/>
            <person name="Boutry M."/>
            <person name="Bowser L."/>
            <person name="Buhrmester J."/>
            <person name="Cadieu E."/>
            <person name="Capela D."/>
            <person name="Chain P."/>
            <person name="Cowie A."/>
            <person name="Davis R.W."/>
            <person name="Dreano S."/>
            <person name="Federspiel N.A."/>
            <person name="Fisher R.F."/>
            <person name="Gloux S."/>
            <person name="Godrie T."/>
            <person name="Goffeau A."/>
            <person name="Golding B."/>
            <person name="Gouzy J."/>
            <person name="Gurjal M."/>
            <person name="Hernandez-Lucas I."/>
            <person name="Hong A."/>
            <person name="Huizar L."/>
            <person name="Hyman R.W."/>
            <person name="Jones T."/>
            <person name="Kahn D."/>
            <person name="Kahn M.L."/>
            <person name="Kalman S."/>
            <person name="Keating D.H."/>
            <person name="Kiss E."/>
            <person name="Komp C."/>
            <person name="Lelaure V."/>
            <person name="Masuy D."/>
            <person name="Palm C."/>
            <person name="Peck M.C."/>
            <person name="Pohl T.M."/>
            <person name="Portetelle D."/>
            <person name="Purnelle B."/>
            <person name="Ramsperger U."/>
            <person name="Surzycki R."/>
            <person name="Thebault P."/>
            <person name="Vandenbol M."/>
            <person name="Vorhoelter F.J."/>
            <person name="Weidner S."/>
            <person name="Wells D.H."/>
            <person name="Wong K."/>
            <person name="Yeh K.-C."/>
            <person name="Batut J."/>
        </authorList>
    </citation>
    <scope>NUCLEOTIDE SEQUENCE [LARGE SCALE GENOMIC DNA]</scope>
    <source>
        <strain evidence="8">1021</strain>
    </source>
</reference>
<reference key="3">
    <citation type="journal article" date="2005" name="J. Bacteriol.">
        <title>Novel pathway for arsenic detoxification in the legume symbiont Sinorhizobium meliloti.</title>
        <authorList>
            <person name="Yang H.C."/>
            <person name="Cheng J."/>
            <person name="Finan T.M."/>
            <person name="Rosen B.P."/>
            <person name="Bhattacharjee H."/>
        </authorList>
    </citation>
    <scope>GENE NAME</scope>
    <scope>DISRUPTION PHENOTYPE</scope>
    <source>
        <strain evidence="4">1021</strain>
    </source>
</reference>
<reference evidence="9" key="4">
    <citation type="journal article" date="2007" name="FEBS Lett.">
        <title>Crystal structure of the flavoprotein ArsH from Sinorhizobium meliloti.</title>
        <authorList>
            <person name="Ye J."/>
            <person name="Yang H.C."/>
            <person name="Rosen B.P."/>
            <person name="Bhattacharjee H."/>
        </authorList>
    </citation>
    <scope>X-RAY CRYSTALLOGRAPHY (1.80 ANGSTROMS)</scope>
    <scope>FUNCTION</scope>
    <scope>CATALYTIC ACTIVITY</scope>
    <scope>COFACTOR</scope>
    <scope>BIOPHYSICOCHEMICAL PROPERTIES</scope>
    <scope>SUBUNIT</scope>
    <source>
        <strain evidence="5">1021</strain>
    </source>
</reference>
<gene>
    <name evidence="4 7" type="primary">arsH</name>
    <name evidence="7" type="ordered locus">R01074</name>
    <name evidence="7" type="ORF">SMc02650</name>
</gene>
<evidence type="ECO:0000250" key="1">
    <source>
        <dbReference type="UniProtKB" id="Q9I4D4"/>
    </source>
</evidence>
<evidence type="ECO:0000269" key="2">
    <source>
    </source>
</evidence>
<evidence type="ECO:0000269" key="3">
    <source>
    </source>
</evidence>
<evidence type="ECO:0000303" key="4">
    <source>
    </source>
</evidence>
<evidence type="ECO:0000303" key="5">
    <source>
    </source>
</evidence>
<evidence type="ECO:0000305" key="6"/>
<evidence type="ECO:0000312" key="7">
    <source>
        <dbReference type="EMBL" id="CAC45653.1"/>
    </source>
</evidence>
<evidence type="ECO:0000312" key="8">
    <source>
        <dbReference type="Proteomes" id="UP000001976"/>
    </source>
</evidence>
<evidence type="ECO:0007744" key="9">
    <source>
        <dbReference type="PDB" id="2Q62"/>
    </source>
</evidence>
<evidence type="ECO:0007829" key="10">
    <source>
        <dbReference type="PDB" id="2Q62"/>
    </source>
</evidence>
<sequence>MSDDDSSHDLPAANLQQLRLPDSASLRPAFSTHRPRILILYGSLRTVSYSRLLAEEARRLLEFFGAEVKVFDPSGLPLPDAAPVSHPKVQELRELSIWSEGQVWVSPERHGAMTGIMKAQIDWIPLSTGSIRPTQGKTLAVMQVSGGSQSFNAVNQMRILGRWMRMITIPNQSSVAKAFQEFDANGRMKPSSYYDRVVDVMEELVKFTLLTRDCSAYLTDRYSERKESAAELEHRVTLKSV</sequence>
<accession>Q92R45</accession>
<proteinExistence type="evidence at protein level"/>